<keyword id="KW-0963">Cytoplasm</keyword>
<keyword id="KW-0671">Queuosine biosynthesis</keyword>
<keyword id="KW-1185">Reference proteome</keyword>
<keyword id="KW-0949">S-adenosyl-L-methionine</keyword>
<keyword id="KW-0808">Transferase</keyword>
<evidence type="ECO:0000255" key="1">
    <source>
        <dbReference type="HAMAP-Rule" id="MF_00113"/>
    </source>
</evidence>
<reference key="1">
    <citation type="journal article" date="2008" name="J. Bacteriol.">
        <title>Complete genome sequence of uropathogenic Proteus mirabilis, a master of both adherence and motility.</title>
        <authorList>
            <person name="Pearson M.M."/>
            <person name="Sebaihia M."/>
            <person name="Churcher C."/>
            <person name="Quail M.A."/>
            <person name="Seshasayee A.S."/>
            <person name="Luscombe N.M."/>
            <person name="Abdellah Z."/>
            <person name="Arrosmith C."/>
            <person name="Atkin B."/>
            <person name="Chillingworth T."/>
            <person name="Hauser H."/>
            <person name="Jagels K."/>
            <person name="Moule S."/>
            <person name="Mungall K."/>
            <person name="Norbertczak H."/>
            <person name="Rabbinowitsch E."/>
            <person name="Walker D."/>
            <person name="Whithead S."/>
            <person name="Thomson N.R."/>
            <person name="Rather P.N."/>
            <person name="Parkhill J."/>
            <person name="Mobley H.L.T."/>
        </authorList>
    </citation>
    <scope>NUCLEOTIDE SEQUENCE [LARGE SCALE GENOMIC DNA]</scope>
    <source>
        <strain>HI4320</strain>
    </source>
</reference>
<name>QUEA_PROMH</name>
<sequence length="357" mass="39823">MRVSDFRFDLPESLIAHYPHPQRSGCRLLSLEGKTGNLSHGVFTDVLDKLNAGDLLVFNNTRVIPARIYGRKASGGKIEVLVERMLDEHRVLAHVRASKSPKEGASLILGEDESVQATMIARHDTLFEIRFDDERDVLTILNSIGHMPLPPYIDRPDERSDKELYQTVYNERPGAVAAPTAGLHFDEPLLEALRNKGVEMAFVTLHVGAGTFQPVRVDNIEEHTMHSEYAEVPQEVVDAVLACKARGNRVIAVGTTSVRSLESAAKAAKDALIAPFFDDTQIFIYPGYQYQIIDALITNFHLPESTLIMLVSAFAGYKNTMNAYNVAVEQKYRFFSYGDAMFITRNPLAINEKVGEE</sequence>
<proteinExistence type="inferred from homology"/>
<protein>
    <recommendedName>
        <fullName evidence="1">S-adenosylmethionine:tRNA ribosyltransferase-isomerase</fullName>
        <ecNumber evidence="1">2.4.99.17</ecNumber>
    </recommendedName>
    <alternativeName>
        <fullName evidence="1">Queuosine biosynthesis protein QueA</fullName>
    </alternativeName>
</protein>
<organism>
    <name type="scientific">Proteus mirabilis (strain HI4320)</name>
    <dbReference type="NCBI Taxonomy" id="529507"/>
    <lineage>
        <taxon>Bacteria</taxon>
        <taxon>Pseudomonadati</taxon>
        <taxon>Pseudomonadota</taxon>
        <taxon>Gammaproteobacteria</taxon>
        <taxon>Enterobacterales</taxon>
        <taxon>Morganellaceae</taxon>
        <taxon>Proteus</taxon>
    </lineage>
</organism>
<feature type="chain" id="PRO_1000094802" description="S-adenosylmethionine:tRNA ribosyltransferase-isomerase">
    <location>
        <begin position="1"/>
        <end position="357"/>
    </location>
</feature>
<accession>B4EU12</accession>
<comment type="function">
    <text evidence="1">Transfers and isomerizes the ribose moiety from AdoMet to the 7-aminomethyl group of 7-deazaguanine (preQ1-tRNA) to give epoxyqueuosine (oQ-tRNA).</text>
</comment>
<comment type="catalytic activity">
    <reaction evidence="1">
        <text>7-aminomethyl-7-carbaguanosine(34) in tRNA + S-adenosyl-L-methionine = epoxyqueuosine(34) in tRNA + adenine + L-methionine + 2 H(+)</text>
        <dbReference type="Rhea" id="RHEA:32155"/>
        <dbReference type="Rhea" id="RHEA-COMP:10342"/>
        <dbReference type="Rhea" id="RHEA-COMP:18582"/>
        <dbReference type="ChEBI" id="CHEBI:15378"/>
        <dbReference type="ChEBI" id="CHEBI:16708"/>
        <dbReference type="ChEBI" id="CHEBI:57844"/>
        <dbReference type="ChEBI" id="CHEBI:59789"/>
        <dbReference type="ChEBI" id="CHEBI:82833"/>
        <dbReference type="ChEBI" id="CHEBI:194443"/>
        <dbReference type="EC" id="2.4.99.17"/>
    </reaction>
</comment>
<comment type="pathway">
    <text evidence="1">tRNA modification; tRNA-queuosine biosynthesis.</text>
</comment>
<comment type="subunit">
    <text evidence="1">Monomer.</text>
</comment>
<comment type="subcellular location">
    <subcellularLocation>
        <location evidence="1">Cytoplasm</location>
    </subcellularLocation>
</comment>
<comment type="similarity">
    <text evidence="1">Belongs to the QueA family.</text>
</comment>
<gene>
    <name evidence="1" type="primary">queA</name>
    <name type="ordered locus">PMI0075</name>
</gene>
<dbReference type="EC" id="2.4.99.17" evidence="1"/>
<dbReference type="EMBL" id="AM942759">
    <property type="protein sequence ID" value="CAR40314.1"/>
    <property type="molecule type" value="Genomic_DNA"/>
</dbReference>
<dbReference type="RefSeq" id="WP_012367465.1">
    <property type="nucleotide sequence ID" value="NC_010554.1"/>
</dbReference>
<dbReference type="SMR" id="B4EU12"/>
<dbReference type="EnsemblBacteria" id="CAR40314">
    <property type="protein sequence ID" value="CAR40314"/>
    <property type="gene ID" value="PMI0075"/>
</dbReference>
<dbReference type="GeneID" id="6801943"/>
<dbReference type="KEGG" id="pmr:PMI0075"/>
<dbReference type="PATRIC" id="fig|529507.6.peg.75"/>
<dbReference type="eggNOG" id="COG0809">
    <property type="taxonomic scope" value="Bacteria"/>
</dbReference>
<dbReference type="HOGENOM" id="CLU_039110_1_0_6"/>
<dbReference type="UniPathway" id="UPA00392"/>
<dbReference type="Proteomes" id="UP000008319">
    <property type="component" value="Chromosome"/>
</dbReference>
<dbReference type="GO" id="GO:0005737">
    <property type="term" value="C:cytoplasm"/>
    <property type="evidence" value="ECO:0007669"/>
    <property type="project" value="UniProtKB-SubCell"/>
</dbReference>
<dbReference type="GO" id="GO:0051075">
    <property type="term" value="F:S-adenosylmethionine:tRNA ribosyltransferase-isomerase activity"/>
    <property type="evidence" value="ECO:0007669"/>
    <property type="project" value="UniProtKB-EC"/>
</dbReference>
<dbReference type="GO" id="GO:0008616">
    <property type="term" value="P:queuosine biosynthetic process"/>
    <property type="evidence" value="ECO:0007669"/>
    <property type="project" value="UniProtKB-UniRule"/>
</dbReference>
<dbReference type="GO" id="GO:0002099">
    <property type="term" value="P:tRNA wobble guanine modification"/>
    <property type="evidence" value="ECO:0007669"/>
    <property type="project" value="TreeGrafter"/>
</dbReference>
<dbReference type="FunFam" id="2.40.10.240:FF:000001">
    <property type="entry name" value="S-adenosylmethionine:tRNA ribosyltransferase-isomerase"/>
    <property type="match status" value="1"/>
</dbReference>
<dbReference type="FunFam" id="3.40.1780.10:FF:000001">
    <property type="entry name" value="S-adenosylmethionine:tRNA ribosyltransferase-isomerase"/>
    <property type="match status" value="1"/>
</dbReference>
<dbReference type="Gene3D" id="2.40.10.240">
    <property type="entry name" value="QueA-like"/>
    <property type="match status" value="1"/>
</dbReference>
<dbReference type="Gene3D" id="3.40.1780.10">
    <property type="entry name" value="QueA-like"/>
    <property type="match status" value="1"/>
</dbReference>
<dbReference type="HAMAP" id="MF_00113">
    <property type="entry name" value="QueA"/>
    <property type="match status" value="1"/>
</dbReference>
<dbReference type="InterPro" id="IPR003699">
    <property type="entry name" value="QueA"/>
</dbReference>
<dbReference type="InterPro" id="IPR042118">
    <property type="entry name" value="QueA_dom1"/>
</dbReference>
<dbReference type="InterPro" id="IPR042119">
    <property type="entry name" value="QueA_dom2"/>
</dbReference>
<dbReference type="InterPro" id="IPR036100">
    <property type="entry name" value="QueA_sf"/>
</dbReference>
<dbReference type="NCBIfam" id="NF001140">
    <property type="entry name" value="PRK00147.1"/>
    <property type="match status" value="1"/>
</dbReference>
<dbReference type="NCBIfam" id="TIGR00113">
    <property type="entry name" value="queA"/>
    <property type="match status" value="1"/>
</dbReference>
<dbReference type="PANTHER" id="PTHR30307">
    <property type="entry name" value="S-ADENOSYLMETHIONINE:TRNA RIBOSYLTRANSFERASE-ISOMERASE"/>
    <property type="match status" value="1"/>
</dbReference>
<dbReference type="PANTHER" id="PTHR30307:SF0">
    <property type="entry name" value="S-ADENOSYLMETHIONINE:TRNA RIBOSYLTRANSFERASE-ISOMERASE"/>
    <property type="match status" value="1"/>
</dbReference>
<dbReference type="Pfam" id="PF02547">
    <property type="entry name" value="Queuosine_synth"/>
    <property type="match status" value="1"/>
</dbReference>
<dbReference type="SUPFAM" id="SSF111337">
    <property type="entry name" value="QueA-like"/>
    <property type="match status" value="1"/>
</dbReference>